<sequence>MNGTISVLLAGGGTAGHVEPAMAVADALAALEPGVRITALGTERGLETRLVPERGYALELITPVPLPRKLSGDLARLPMRVRRAVRETREILDTVHADVVIGFGGYVALPAYLAARRNRVPIVVHEANASAGLANKVGARFARRVLSAVADPGLGRVEVVGTPVRSSITELDRAALRAEARAHFGFADDARVLLVFGGSQGARSLNNVVSGAAKALAAAGISVLHAYGAKNTLELPDPAPGDPPYVAVPYLSRMDLAYAAADLAICRSGAMTVAEVTAVGLPAVYVPLPIGNGEQRLNARPVVETGGGLVVDDADLSPQFVADTVVPLLTDTGRLQTMTAGAALSGHRDAARHVAHVALDVAREAAGGRKGVR</sequence>
<proteinExistence type="inferred from homology"/>
<name>MURG_MYCSS</name>
<comment type="function">
    <text evidence="1">Cell wall formation. Catalyzes the transfer of a GlcNAc subunit on undecaprenyl-pyrophosphoryl-MurNAc-pentapeptide (lipid intermediate I) to form undecaprenyl-pyrophosphoryl-MurNAc-(pentapeptide)GlcNAc (lipid intermediate II).</text>
</comment>
<comment type="catalytic activity">
    <reaction evidence="1">
        <text>di-trans,octa-cis-undecaprenyl diphospho-N-acetyl-alpha-D-muramoyl-L-alanyl-D-glutamyl-meso-2,6-diaminopimeloyl-D-alanyl-D-alanine + UDP-N-acetyl-alpha-D-glucosamine = di-trans,octa-cis-undecaprenyl diphospho-[N-acetyl-alpha-D-glucosaminyl-(1-&gt;4)]-N-acetyl-alpha-D-muramoyl-L-alanyl-D-glutamyl-meso-2,6-diaminopimeloyl-D-alanyl-D-alanine + UDP + H(+)</text>
        <dbReference type="Rhea" id="RHEA:31227"/>
        <dbReference type="ChEBI" id="CHEBI:15378"/>
        <dbReference type="ChEBI" id="CHEBI:57705"/>
        <dbReference type="ChEBI" id="CHEBI:58223"/>
        <dbReference type="ChEBI" id="CHEBI:61387"/>
        <dbReference type="ChEBI" id="CHEBI:61388"/>
        <dbReference type="EC" id="2.4.1.227"/>
    </reaction>
</comment>
<comment type="pathway">
    <text evidence="1">Cell wall biogenesis; peptidoglycan biosynthesis.</text>
</comment>
<comment type="subcellular location">
    <subcellularLocation>
        <location evidence="1">Cell membrane</location>
        <topology evidence="1">Peripheral membrane protein</topology>
        <orientation evidence="1">Cytoplasmic side</orientation>
    </subcellularLocation>
</comment>
<comment type="similarity">
    <text evidence="1">Belongs to the glycosyltransferase 28 family. MurG subfamily.</text>
</comment>
<evidence type="ECO:0000255" key="1">
    <source>
        <dbReference type="HAMAP-Rule" id="MF_00033"/>
    </source>
</evidence>
<keyword id="KW-0131">Cell cycle</keyword>
<keyword id="KW-0132">Cell division</keyword>
<keyword id="KW-1003">Cell membrane</keyword>
<keyword id="KW-0133">Cell shape</keyword>
<keyword id="KW-0961">Cell wall biogenesis/degradation</keyword>
<keyword id="KW-0328">Glycosyltransferase</keyword>
<keyword id="KW-0472">Membrane</keyword>
<keyword id="KW-0573">Peptidoglycan synthesis</keyword>
<keyword id="KW-0808">Transferase</keyword>
<organism>
    <name type="scientific">Mycobacterium sp. (strain MCS)</name>
    <dbReference type="NCBI Taxonomy" id="164756"/>
    <lineage>
        <taxon>Bacteria</taxon>
        <taxon>Bacillati</taxon>
        <taxon>Actinomycetota</taxon>
        <taxon>Actinomycetes</taxon>
        <taxon>Mycobacteriales</taxon>
        <taxon>Mycobacteriaceae</taxon>
        <taxon>Mycobacterium</taxon>
    </lineage>
</organism>
<feature type="chain" id="PRO_0000315122" description="UDP-N-acetylglucosamine--N-acetylmuramyl-(pentapeptide) pyrophosphoryl-undecaprenol N-acetylglucosamine transferase">
    <location>
        <begin position="1"/>
        <end position="373"/>
    </location>
</feature>
<feature type="binding site" evidence="1">
    <location>
        <begin position="14"/>
        <end position="16"/>
    </location>
    <ligand>
        <name>UDP-N-acetyl-alpha-D-glucosamine</name>
        <dbReference type="ChEBI" id="CHEBI:57705"/>
    </ligand>
</feature>
<feature type="binding site" evidence="1">
    <location>
        <position position="128"/>
    </location>
    <ligand>
        <name>UDP-N-acetyl-alpha-D-glucosamine</name>
        <dbReference type="ChEBI" id="CHEBI:57705"/>
    </ligand>
</feature>
<feature type="binding site" evidence="1">
    <location>
        <position position="165"/>
    </location>
    <ligand>
        <name>UDP-N-acetyl-alpha-D-glucosamine</name>
        <dbReference type="ChEBI" id="CHEBI:57705"/>
    </ligand>
</feature>
<feature type="binding site" evidence="1">
    <location>
        <position position="199"/>
    </location>
    <ligand>
        <name>UDP-N-acetyl-alpha-D-glucosamine</name>
        <dbReference type="ChEBI" id="CHEBI:57705"/>
    </ligand>
</feature>
<feature type="binding site" evidence="1">
    <location>
        <position position="295"/>
    </location>
    <ligand>
        <name>UDP-N-acetyl-alpha-D-glucosamine</name>
        <dbReference type="ChEBI" id="CHEBI:57705"/>
    </ligand>
</feature>
<protein>
    <recommendedName>
        <fullName evidence="1">UDP-N-acetylglucosamine--N-acetylmuramyl-(pentapeptide) pyrophosphoryl-undecaprenol N-acetylglucosamine transferase</fullName>
        <ecNumber evidence="1">2.4.1.227</ecNumber>
    </recommendedName>
    <alternativeName>
        <fullName evidence="1">Undecaprenyl-PP-MurNAc-pentapeptide-UDPGlcNAc GlcNAc transferase</fullName>
    </alternativeName>
</protein>
<gene>
    <name evidence="1" type="primary">murG</name>
    <name type="ordered locus">Mmcs_3256</name>
</gene>
<dbReference type="EC" id="2.4.1.227" evidence="1"/>
<dbReference type="EMBL" id="CP000384">
    <property type="protein sequence ID" value="ABG09363.1"/>
    <property type="molecule type" value="Genomic_DNA"/>
</dbReference>
<dbReference type="SMR" id="Q1B6X1"/>
<dbReference type="CAZy" id="GT28">
    <property type="family name" value="Glycosyltransferase Family 28"/>
</dbReference>
<dbReference type="KEGG" id="mmc:Mmcs_3256"/>
<dbReference type="HOGENOM" id="CLU_037404_1_0_11"/>
<dbReference type="BioCyc" id="MSP164756:G1G6O-3322-MONOMER"/>
<dbReference type="UniPathway" id="UPA00219"/>
<dbReference type="GO" id="GO:0005886">
    <property type="term" value="C:plasma membrane"/>
    <property type="evidence" value="ECO:0007669"/>
    <property type="project" value="UniProtKB-SubCell"/>
</dbReference>
<dbReference type="GO" id="GO:0051991">
    <property type="term" value="F:UDP-N-acetyl-D-glucosamine:N-acetylmuramoyl-L-alanyl-D-glutamyl-meso-2,6-diaminopimelyl-D-alanyl-D-alanine-diphosphoundecaprenol 4-beta-N-acetylglucosaminlytransferase activity"/>
    <property type="evidence" value="ECO:0007669"/>
    <property type="project" value="RHEA"/>
</dbReference>
<dbReference type="GO" id="GO:0050511">
    <property type="term" value="F:undecaprenyldiphospho-muramoylpentapeptide beta-N-acetylglucosaminyltransferase activity"/>
    <property type="evidence" value="ECO:0007669"/>
    <property type="project" value="UniProtKB-UniRule"/>
</dbReference>
<dbReference type="GO" id="GO:0005975">
    <property type="term" value="P:carbohydrate metabolic process"/>
    <property type="evidence" value="ECO:0007669"/>
    <property type="project" value="InterPro"/>
</dbReference>
<dbReference type="GO" id="GO:0051301">
    <property type="term" value="P:cell division"/>
    <property type="evidence" value="ECO:0007669"/>
    <property type="project" value="UniProtKB-KW"/>
</dbReference>
<dbReference type="GO" id="GO:0071555">
    <property type="term" value="P:cell wall organization"/>
    <property type="evidence" value="ECO:0007669"/>
    <property type="project" value="UniProtKB-KW"/>
</dbReference>
<dbReference type="GO" id="GO:0030259">
    <property type="term" value="P:lipid glycosylation"/>
    <property type="evidence" value="ECO:0007669"/>
    <property type="project" value="UniProtKB-UniRule"/>
</dbReference>
<dbReference type="GO" id="GO:0009252">
    <property type="term" value="P:peptidoglycan biosynthetic process"/>
    <property type="evidence" value="ECO:0007669"/>
    <property type="project" value="UniProtKB-UniRule"/>
</dbReference>
<dbReference type="GO" id="GO:0008360">
    <property type="term" value="P:regulation of cell shape"/>
    <property type="evidence" value="ECO:0007669"/>
    <property type="project" value="UniProtKB-KW"/>
</dbReference>
<dbReference type="CDD" id="cd03785">
    <property type="entry name" value="GT28_MurG"/>
    <property type="match status" value="1"/>
</dbReference>
<dbReference type="Gene3D" id="3.40.50.2000">
    <property type="entry name" value="Glycogen Phosphorylase B"/>
    <property type="match status" value="2"/>
</dbReference>
<dbReference type="HAMAP" id="MF_00033">
    <property type="entry name" value="MurG"/>
    <property type="match status" value="1"/>
</dbReference>
<dbReference type="InterPro" id="IPR006009">
    <property type="entry name" value="GlcNAc_MurG"/>
</dbReference>
<dbReference type="InterPro" id="IPR007235">
    <property type="entry name" value="Glyco_trans_28_C"/>
</dbReference>
<dbReference type="InterPro" id="IPR004276">
    <property type="entry name" value="GlycoTrans_28_N"/>
</dbReference>
<dbReference type="NCBIfam" id="TIGR01133">
    <property type="entry name" value="murG"/>
    <property type="match status" value="1"/>
</dbReference>
<dbReference type="PANTHER" id="PTHR21015:SF22">
    <property type="entry name" value="GLYCOSYLTRANSFERASE"/>
    <property type="match status" value="1"/>
</dbReference>
<dbReference type="PANTHER" id="PTHR21015">
    <property type="entry name" value="UDP-N-ACETYLGLUCOSAMINE--N-ACETYLMURAMYL-(PENTAPEPTIDE) PYROPHOSPHORYL-UNDECAPRENOL N-ACETYLGLUCOSAMINE TRANSFERASE 1"/>
    <property type="match status" value="1"/>
</dbReference>
<dbReference type="Pfam" id="PF04101">
    <property type="entry name" value="Glyco_tran_28_C"/>
    <property type="match status" value="1"/>
</dbReference>
<dbReference type="Pfam" id="PF03033">
    <property type="entry name" value="Glyco_transf_28"/>
    <property type="match status" value="1"/>
</dbReference>
<dbReference type="SUPFAM" id="SSF53756">
    <property type="entry name" value="UDP-Glycosyltransferase/glycogen phosphorylase"/>
    <property type="match status" value="1"/>
</dbReference>
<accession>Q1B6X1</accession>
<reference key="1">
    <citation type="submission" date="2006-06" db="EMBL/GenBank/DDBJ databases">
        <title>Complete sequence of chromosome of Mycobacterium sp. MCS.</title>
        <authorList>
            <consortium name="US DOE Joint Genome Institute"/>
            <person name="Copeland A."/>
            <person name="Lucas S."/>
            <person name="Lapidus A."/>
            <person name="Barry K."/>
            <person name="Detter J.C."/>
            <person name="Glavina del Rio T."/>
            <person name="Hammon N."/>
            <person name="Israni S."/>
            <person name="Dalin E."/>
            <person name="Tice H."/>
            <person name="Pitluck S."/>
            <person name="Martinez M."/>
            <person name="Schmutz J."/>
            <person name="Larimer F."/>
            <person name="Land M."/>
            <person name="Hauser L."/>
            <person name="Kyrpides N."/>
            <person name="Kim E."/>
            <person name="Miller C.D."/>
            <person name="Hughes J.E."/>
            <person name="Anderson A.J."/>
            <person name="Sims R.C."/>
            <person name="Richardson P."/>
        </authorList>
    </citation>
    <scope>NUCLEOTIDE SEQUENCE [LARGE SCALE GENOMIC DNA]</scope>
    <source>
        <strain>MCS</strain>
    </source>
</reference>